<accession>Q88QP8</accession>
<dbReference type="EC" id="3.6.5.3" evidence="2"/>
<dbReference type="EMBL" id="AE015451">
    <property type="protein sequence ID" value="AAN66070.1"/>
    <property type="molecule type" value="Genomic_DNA"/>
</dbReference>
<dbReference type="RefSeq" id="NP_742606.1">
    <property type="nucleotide sequence ID" value="NC_002947.4"/>
</dbReference>
<dbReference type="PDB" id="4IW3">
    <property type="method" value="X-ray"/>
    <property type="resolution" value="2.70 A"/>
    <property type="chains" value="B/K=1-397"/>
</dbReference>
<dbReference type="PDB" id="4J0Q">
    <property type="method" value="X-ray"/>
    <property type="resolution" value="2.29 A"/>
    <property type="chains" value="A/B/C/D/E=1-397"/>
</dbReference>
<dbReference type="PDBsum" id="4IW3"/>
<dbReference type="PDBsum" id="4J0Q"/>
<dbReference type="SMR" id="Q88QP8"/>
<dbReference type="STRING" id="160488.PP_0440"/>
<dbReference type="PaxDb" id="160488-PP_0440"/>
<dbReference type="KEGG" id="ppu:PP_0440"/>
<dbReference type="PATRIC" id="fig|160488.4.peg.471"/>
<dbReference type="eggNOG" id="COG0050">
    <property type="taxonomic scope" value="Bacteria"/>
</dbReference>
<dbReference type="HOGENOM" id="CLU_007265_0_0_6"/>
<dbReference type="OrthoDB" id="9803139at2"/>
<dbReference type="PhylomeDB" id="Q88QP8"/>
<dbReference type="BioCyc" id="PPUT160488:G1G01-482-MONOMER"/>
<dbReference type="EvolutionaryTrace" id="Q88QP8"/>
<dbReference type="Proteomes" id="UP000000556">
    <property type="component" value="Chromosome"/>
</dbReference>
<dbReference type="GO" id="GO:0005829">
    <property type="term" value="C:cytosol"/>
    <property type="evidence" value="ECO:0007669"/>
    <property type="project" value="TreeGrafter"/>
</dbReference>
<dbReference type="GO" id="GO:0005525">
    <property type="term" value="F:GTP binding"/>
    <property type="evidence" value="ECO:0007669"/>
    <property type="project" value="UniProtKB-UniRule"/>
</dbReference>
<dbReference type="GO" id="GO:0003924">
    <property type="term" value="F:GTPase activity"/>
    <property type="evidence" value="ECO:0007669"/>
    <property type="project" value="InterPro"/>
</dbReference>
<dbReference type="GO" id="GO:0097216">
    <property type="term" value="F:guanosine tetraphosphate binding"/>
    <property type="evidence" value="ECO:0007669"/>
    <property type="project" value="UniProtKB-ARBA"/>
</dbReference>
<dbReference type="GO" id="GO:0003746">
    <property type="term" value="F:translation elongation factor activity"/>
    <property type="evidence" value="ECO:0007669"/>
    <property type="project" value="UniProtKB-UniRule"/>
</dbReference>
<dbReference type="CDD" id="cd01884">
    <property type="entry name" value="EF_Tu"/>
    <property type="match status" value="1"/>
</dbReference>
<dbReference type="CDD" id="cd03697">
    <property type="entry name" value="EFTU_II"/>
    <property type="match status" value="1"/>
</dbReference>
<dbReference type="CDD" id="cd03707">
    <property type="entry name" value="EFTU_III"/>
    <property type="match status" value="1"/>
</dbReference>
<dbReference type="DisProt" id="DP01571"/>
<dbReference type="FunFam" id="2.40.30.10:FF:000001">
    <property type="entry name" value="Elongation factor Tu"/>
    <property type="match status" value="1"/>
</dbReference>
<dbReference type="FunFam" id="3.40.50.300:FF:000003">
    <property type="entry name" value="Elongation factor Tu"/>
    <property type="match status" value="1"/>
</dbReference>
<dbReference type="Gene3D" id="3.40.50.300">
    <property type="entry name" value="P-loop containing nucleotide triphosphate hydrolases"/>
    <property type="match status" value="1"/>
</dbReference>
<dbReference type="Gene3D" id="2.40.30.10">
    <property type="entry name" value="Translation factors"/>
    <property type="match status" value="2"/>
</dbReference>
<dbReference type="HAMAP" id="MF_00118_B">
    <property type="entry name" value="EF_Tu_B"/>
    <property type="match status" value="1"/>
</dbReference>
<dbReference type="InterPro" id="IPR041709">
    <property type="entry name" value="EF-Tu_GTP-bd"/>
</dbReference>
<dbReference type="InterPro" id="IPR050055">
    <property type="entry name" value="EF-Tu_GTPase"/>
</dbReference>
<dbReference type="InterPro" id="IPR004161">
    <property type="entry name" value="EFTu-like_2"/>
</dbReference>
<dbReference type="InterPro" id="IPR033720">
    <property type="entry name" value="EFTU_2"/>
</dbReference>
<dbReference type="InterPro" id="IPR031157">
    <property type="entry name" value="G_TR_CS"/>
</dbReference>
<dbReference type="InterPro" id="IPR027417">
    <property type="entry name" value="P-loop_NTPase"/>
</dbReference>
<dbReference type="InterPro" id="IPR005225">
    <property type="entry name" value="Small_GTP-bd"/>
</dbReference>
<dbReference type="InterPro" id="IPR000795">
    <property type="entry name" value="T_Tr_GTP-bd_dom"/>
</dbReference>
<dbReference type="InterPro" id="IPR009000">
    <property type="entry name" value="Transl_B-barrel_sf"/>
</dbReference>
<dbReference type="InterPro" id="IPR009001">
    <property type="entry name" value="Transl_elong_EF1A/Init_IF2_C"/>
</dbReference>
<dbReference type="InterPro" id="IPR004541">
    <property type="entry name" value="Transl_elong_EFTu/EF1A_bac/org"/>
</dbReference>
<dbReference type="InterPro" id="IPR004160">
    <property type="entry name" value="Transl_elong_EFTu/EF1A_C"/>
</dbReference>
<dbReference type="NCBIfam" id="TIGR00485">
    <property type="entry name" value="EF-Tu"/>
    <property type="match status" value="1"/>
</dbReference>
<dbReference type="NCBIfam" id="NF000766">
    <property type="entry name" value="PRK00049.1"/>
    <property type="match status" value="1"/>
</dbReference>
<dbReference type="NCBIfam" id="NF009372">
    <property type="entry name" value="PRK12735.1"/>
    <property type="match status" value="1"/>
</dbReference>
<dbReference type="NCBIfam" id="NF009373">
    <property type="entry name" value="PRK12736.1"/>
    <property type="match status" value="1"/>
</dbReference>
<dbReference type="NCBIfam" id="TIGR00231">
    <property type="entry name" value="small_GTP"/>
    <property type="match status" value="1"/>
</dbReference>
<dbReference type="PANTHER" id="PTHR43721:SF22">
    <property type="entry name" value="ELONGATION FACTOR TU, MITOCHONDRIAL"/>
    <property type="match status" value="1"/>
</dbReference>
<dbReference type="PANTHER" id="PTHR43721">
    <property type="entry name" value="ELONGATION FACTOR TU-RELATED"/>
    <property type="match status" value="1"/>
</dbReference>
<dbReference type="Pfam" id="PF00009">
    <property type="entry name" value="GTP_EFTU"/>
    <property type="match status" value="1"/>
</dbReference>
<dbReference type="Pfam" id="PF03144">
    <property type="entry name" value="GTP_EFTU_D2"/>
    <property type="match status" value="1"/>
</dbReference>
<dbReference type="Pfam" id="PF03143">
    <property type="entry name" value="GTP_EFTU_D3"/>
    <property type="match status" value="1"/>
</dbReference>
<dbReference type="PRINTS" id="PR00315">
    <property type="entry name" value="ELONGATNFCT"/>
</dbReference>
<dbReference type="SUPFAM" id="SSF50465">
    <property type="entry name" value="EF-Tu/eEF-1alpha/eIF2-gamma C-terminal domain"/>
    <property type="match status" value="1"/>
</dbReference>
<dbReference type="SUPFAM" id="SSF52540">
    <property type="entry name" value="P-loop containing nucleoside triphosphate hydrolases"/>
    <property type="match status" value="1"/>
</dbReference>
<dbReference type="SUPFAM" id="SSF50447">
    <property type="entry name" value="Translation proteins"/>
    <property type="match status" value="1"/>
</dbReference>
<dbReference type="PROSITE" id="PS00301">
    <property type="entry name" value="G_TR_1"/>
    <property type="match status" value="1"/>
</dbReference>
<dbReference type="PROSITE" id="PS51722">
    <property type="entry name" value="G_TR_2"/>
    <property type="match status" value="1"/>
</dbReference>
<reference key="1">
    <citation type="journal article" date="2002" name="Environ. Microbiol.">
        <title>Complete genome sequence and comparative analysis of the metabolically versatile Pseudomonas putida KT2440.</title>
        <authorList>
            <person name="Nelson K.E."/>
            <person name="Weinel C."/>
            <person name="Paulsen I.T."/>
            <person name="Dodson R.J."/>
            <person name="Hilbert H."/>
            <person name="Martins dos Santos V.A.P."/>
            <person name="Fouts D.E."/>
            <person name="Gill S.R."/>
            <person name="Pop M."/>
            <person name="Holmes M."/>
            <person name="Brinkac L.M."/>
            <person name="Beanan M.J."/>
            <person name="DeBoy R.T."/>
            <person name="Daugherty S.C."/>
            <person name="Kolonay J.F."/>
            <person name="Madupu R."/>
            <person name="Nelson W.C."/>
            <person name="White O."/>
            <person name="Peterson J.D."/>
            <person name="Khouri H.M."/>
            <person name="Hance I."/>
            <person name="Chris Lee P."/>
            <person name="Holtzapple E.K."/>
            <person name="Scanlan D."/>
            <person name="Tran K."/>
            <person name="Moazzez A."/>
            <person name="Utterback T.R."/>
            <person name="Rizzo M."/>
            <person name="Lee K."/>
            <person name="Kosack D."/>
            <person name="Moestl D."/>
            <person name="Wedler H."/>
            <person name="Lauber J."/>
            <person name="Stjepandic D."/>
            <person name="Hoheisel J."/>
            <person name="Straetz M."/>
            <person name="Heim S."/>
            <person name="Kiewitz C."/>
            <person name="Eisen J.A."/>
            <person name="Timmis K.N."/>
            <person name="Duesterhoeft A."/>
            <person name="Tuemmler B."/>
            <person name="Fraser C.M."/>
        </authorList>
    </citation>
    <scope>NUCLEOTIDE SEQUENCE [LARGE SCALE GENOMIC DNA]</scope>
    <source>
        <strain>ATCC 47054 / DSM 6125 / CFBP 8728 / NCIMB 11950 / KT2440</strain>
    </source>
</reference>
<sequence>MAKEKFDRSLPHVNVGTIGHVDHGKTTLTAALTRVCSEVFGSAIVEFDKIDSAPEEKARGITINTAHVEYNSTIRHYAHVDCPGHADYVKNMITGAAQMDGAILVCSAADGPMPQTREHILLSRQVGVPYIVVFLNKADLVDDAELLELVEMEVRDLLSTYDFPGDDTPIIIGSARMALEGKDDNEMGTTAVKKLVETLDSYIPEPVRAIDQPFLMPIEDVFSISGRGTVVTGRIERGIVRVQDPLEIVGLRDTTTTTCTGVEMFRKLLDEGRAGENCGVLLRGTKRDDVERGQVLVKPGSVKPHTKFTAEVYVLSKEEGGRHTPFFKGYRPQFYFRTTDVTGNCELPEGVEMVMPGDNIQMTVTLIKTIAMEDGLRFAIREGGRTVGAGVVAKIIE</sequence>
<protein>
    <recommendedName>
        <fullName evidence="2">Elongation factor Tu-A</fullName>
        <shortName evidence="2">EF-Tu-A</shortName>
        <ecNumber evidence="2">3.6.5.3</ecNumber>
    </recommendedName>
</protein>
<proteinExistence type="evidence at protein level"/>
<gene>
    <name evidence="2" type="primary">tufA</name>
    <name type="synonym">tuf-1</name>
    <name type="ordered locus">PP_0440</name>
</gene>
<organism>
    <name type="scientific">Pseudomonas putida (strain ATCC 47054 / DSM 6125 / CFBP 8728 / NCIMB 11950 / KT2440)</name>
    <dbReference type="NCBI Taxonomy" id="160488"/>
    <lineage>
        <taxon>Bacteria</taxon>
        <taxon>Pseudomonadati</taxon>
        <taxon>Pseudomonadota</taxon>
        <taxon>Gammaproteobacteria</taxon>
        <taxon>Pseudomonadales</taxon>
        <taxon>Pseudomonadaceae</taxon>
        <taxon>Pseudomonas</taxon>
    </lineage>
</organism>
<feature type="chain" id="PRO_0000091366" description="Elongation factor Tu-A">
    <location>
        <begin position="1"/>
        <end position="397"/>
    </location>
</feature>
<feature type="domain" description="tr-type G">
    <location>
        <begin position="10"/>
        <end position="207"/>
    </location>
</feature>
<feature type="region of interest" description="G1" evidence="1">
    <location>
        <begin position="19"/>
        <end position="26"/>
    </location>
</feature>
<feature type="region of interest" description="G2" evidence="1">
    <location>
        <begin position="60"/>
        <end position="64"/>
    </location>
</feature>
<feature type="region of interest" description="G3" evidence="1">
    <location>
        <begin position="81"/>
        <end position="84"/>
    </location>
</feature>
<feature type="region of interest" description="G4" evidence="1">
    <location>
        <begin position="136"/>
        <end position="139"/>
    </location>
</feature>
<feature type="region of interest" description="G5" evidence="1">
    <location>
        <begin position="174"/>
        <end position="176"/>
    </location>
</feature>
<feature type="binding site" evidence="2">
    <location>
        <begin position="19"/>
        <end position="26"/>
    </location>
    <ligand>
        <name>GTP</name>
        <dbReference type="ChEBI" id="CHEBI:37565"/>
    </ligand>
</feature>
<feature type="binding site" evidence="2">
    <location>
        <position position="26"/>
    </location>
    <ligand>
        <name>Mg(2+)</name>
        <dbReference type="ChEBI" id="CHEBI:18420"/>
    </ligand>
</feature>
<feature type="binding site" evidence="2">
    <location>
        <begin position="81"/>
        <end position="85"/>
    </location>
    <ligand>
        <name>GTP</name>
        <dbReference type="ChEBI" id="CHEBI:37565"/>
    </ligand>
</feature>
<feature type="binding site" evidence="2">
    <location>
        <begin position="136"/>
        <end position="139"/>
    </location>
    <ligand>
        <name>GTP</name>
        <dbReference type="ChEBI" id="CHEBI:37565"/>
    </ligand>
</feature>
<feature type="strand" evidence="4">
    <location>
        <begin position="12"/>
        <end position="20"/>
    </location>
</feature>
<feature type="strand" evidence="3">
    <location>
        <begin position="21"/>
        <end position="24"/>
    </location>
</feature>
<feature type="helix" evidence="4">
    <location>
        <begin position="25"/>
        <end position="39"/>
    </location>
</feature>
<feature type="strand" evidence="4">
    <location>
        <begin position="66"/>
        <end position="71"/>
    </location>
</feature>
<feature type="strand" evidence="4">
    <location>
        <begin position="76"/>
        <end position="81"/>
    </location>
</feature>
<feature type="helix" evidence="4">
    <location>
        <begin position="85"/>
        <end position="94"/>
    </location>
</feature>
<feature type="strand" evidence="4">
    <location>
        <begin position="102"/>
        <end position="107"/>
    </location>
</feature>
<feature type="turn" evidence="4">
    <location>
        <begin position="108"/>
        <end position="110"/>
    </location>
</feature>
<feature type="helix" evidence="4">
    <location>
        <begin position="114"/>
        <end position="126"/>
    </location>
</feature>
<feature type="strand" evidence="4">
    <location>
        <begin position="131"/>
        <end position="136"/>
    </location>
</feature>
<feature type="helix" evidence="4">
    <location>
        <begin position="138"/>
        <end position="140"/>
    </location>
</feature>
<feature type="helix" evidence="4">
    <location>
        <begin position="144"/>
        <end position="160"/>
    </location>
</feature>
<feature type="turn" evidence="4">
    <location>
        <begin position="165"/>
        <end position="167"/>
    </location>
</feature>
<feature type="strand" evidence="4">
    <location>
        <begin position="170"/>
        <end position="172"/>
    </location>
</feature>
<feature type="helix" evidence="4">
    <location>
        <begin position="175"/>
        <end position="179"/>
    </location>
</feature>
<feature type="helix" evidence="4">
    <location>
        <begin position="184"/>
        <end position="186"/>
    </location>
</feature>
<feature type="helix" evidence="4">
    <location>
        <begin position="189"/>
        <end position="202"/>
    </location>
</feature>
<feature type="helix" evidence="4">
    <location>
        <begin position="209"/>
        <end position="211"/>
    </location>
</feature>
<feature type="strand" evidence="4">
    <location>
        <begin position="215"/>
        <end position="217"/>
    </location>
</feature>
<feature type="strand" evidence="4">
    <location>
        <begin position="221"/>
        <end position="224"/>
    </location>
</feature>
<feature type="turn" evidence="3">
    <location>
        <begin position="225"/>
        <end position="227"/>
    </location>
</feature>
<feature type="strand" evidence="4">
    <location>
        <begin position="229"/>
        <end position="234"/>
    </location>
</feature>
<feature type="strand" evidence="4">
    <location>
        <begin position="237"/>
        <end position="241"/>
    </location>
</feature>
<feature type="strand" evidence="4">
    <location>
        <begin position="245"/>
        <end position="252"/>
    </location>
</feature>
<feature type="strand" evidence="4">
    <location>
        <begin position="255"/>
        <end position="264"/>
    </location>
</feature>
<feature type="strand" evidence="4">
    <location>
        <begin position="267"/>
        <end position="273"/>
    </location>
</feature>
<feature type="strand" evidence="4">
    <location>
        <begin position="277"/>
        <end position="284"/>
    </location>
</feature>
<feature type="helix" evidence="4">
    <location>
        <begin position="287"/>
        <end position="289"/>
    </location>
</feature>
<feature type="strand" evidence="4">
    <location>
        <begin position="295"/>
        <end position="298"/>
    </location>
</feature>
<feature type="strand" evidence="4">
    <location>
        <begin position="304"/>
        <end position="314"/>
    </location>
</feature>
<feature type="turn" evidence="4">
    <location>
        <begin position="317"/>
        <end position="320"/>
    </location>
</feature>
<feature type="strand" evidence="3">
    <location>
        <begin position="326"/>
        <end position="329"/>
    </location>
</feature>
<feature type="strand" evidence="4">
    <location>
        <begin position="333"/>
        <end position="336"/>
    </location>
</feature>
<feature type="strand" evidence="4">
    <location>
        <begin position="339"/>
        <end position="346"/>
    </location>
</feature>
<feature type="strand" evidence="4">
    <location>
        <begin position="352"/>
        <end position="354"/>
    </location>
</feature>
<feature type="strand" evidence="4">
    <location>
        <begin position="359"/>
        <end position="371"/>
    </location>
</feature>
<feature type="strand" evidence="4">
    <location>
        <begin position="377"/>
        <end position="382"/>
    </location>
</feature>
<feature type="strand" evidence="4">
    <location>
        <begin position="385"/>
        <end position="397"/>
    </location>
</feature>
<name>EFTU1_PSEPK</name>
<evidence type="ECO:0000250" key="1"/>
<evidence type="ECO:0000255" key="2">
    <source>
        <dbReference type="HAMAP-Rule" id="MF_00118"/>
    </source>
</evidence>
<evidence type="ECO:0007829" key="3">
    <source>
        <dbReference type="PDB" id="4IW3"/>
    </source>
</evidence>
<evidence type="ECO:0007829" key="4">
    <source>
        <dbReference type="PDB" id="4J0Q"/>
    </source>
</evidence>
<comment type="function">
    <text evidence="2">GTP hydrolase that promotes the GTP-dependent binding of aminoacyl-tRNA to the A-site of ribosomes during protein biosynthesis.</text>
</comment>
<comment type="catalytic activity">
    <reaction evidence="2">
        <text>GTP + H2O = GDP + phosphate + H(+)</text>
        <dbReference type="Rhea" id="RHEA:19669"/>
        <dbReference type="ChEBI" id="CHEBI:15377"/>
        <dbReference type="ChEBI" id="CHEBI:15378"/>
        <dbReference type="ChEBI" id="CHEBI:37565"/>
        <dbReference type="ChEBI" id="CHEBI:43474"/>
        <dbReference type="ChEBI" id="CHEBI:58189"/>
        <dbReference type="EC" id="3.6.5.3"/>
    </reaction>
    <physiologicalReaction direction="left-to-right" evidence="2">
        <dbReference type="Rhea" id="RHEA:19670"/>
    </physiologicalReaction>
</comment>
<comment type="subunit">
    <text evidence="2">Monomer.</text>
</comment>
<comment type="subcellular location">
    <subcellularLocation>
        <location evidence="2">Cytoplasm</location>
    </subcellularLocation>
</comment>
<comment type="similarity">
    <text evidence="2">Belongs to the TRAFAC class translation factor GTPase superfamily. Classic translation factor GTPase family. EF-Tu/EF-1A subfamily.</text>
</comment>
<keyword id="KW-0002">3D-structure</keyword>
<keyword id="KW-0963">Cytoplasm</keyword>
<keyword id="KW-0251">Elongation factor</keyword>
<keyword id="KW-0342">GTP-binding</keyword>
<keyword id="KW-0378">Hydrolase</keyword>
<keyword id="KW-0460">Magnesium</keyword>
<keyword id="KW-0479">Metal-binding</keyword>
<keyword id="KW-0547">Nucleotide-binding</keyword>
<keyword id="KW-0648">Protein biosynthesis</keyword>
<keyword id="KW-1185">Reference proteome</keyword>